<protein>
    <recommendedName>
        <fullName evidence="1">Nucleoid-associated protein YbaB</fullName>
    </recommendedName>
</protein>
<sequence length="109" mass="12015">MFGKGGLGNLMKQAQQMQEKMQKMQEEIAQLEVTGESGAGLVKVTINGAHNCRRVEIDPSLLEDDKEMLEDLVAAAFNDAARRIEETQKEKMASVSSGMQLPPGFKMPF</sequence>
<proteinExistence type="inferred from homology"/>
<dbReference type="EMBL" id="CP000247">
    <property type="protein sequence ID" value="ABG68561.1"/>
    <property type="molecule type" value="Genomic_DNA"/>
</dbReference>
<dbReference type="RefSeq" id="WP_000467098.1">
    <property type="nucleotide sequence ID" value="NC_008253.1"/>
</dbReference>
<dbReference type="SMR" id="Q0TKH0"/>
<dbReference type="KEGG" id="ecp:ECP_0532"/>
<dbReference type="HOGENOM" id="CLU_140930_0_0_6"/>
<dbReference type="Proteomes" id="UP000009182">
    <property type="component" value="Chromosome"/>
</dbReference>
<dbReference type="GO" id="GO:0043590">
    <property type="term" value="C:bacterial nucleoid"/>
    <property type="evidence" value="ECO:0007669"/>
    <property type="project" value="UniProtKB-UniRule"/>
</dbReference>
<dbReference type="GO" id="GO:0005829">
    <property type="term" value="C:cytosol"/>
    <property type="evidence" value="ECO:0007669"/>
    <property type="project" value="TreeGrafter"/>
</dbReference>
<dbReference type="GO" id="GO:0003677">
    <property type="term" value="F:DNA binding"/>
    <property type="evidence" value="ECO:0007669"/>
    <property type="project" value="UniProtKB-UniRule"/>
</dbReference>
<dbReference type="FunFam" id="3.30.1310.10:FF:000001">
    <property type="entry name" value="Nucleoid-associated protein YbaB"/>
    <property type="match status" value="1"/>
</dbReference>
<dbReference type="Gene3D" id="3.30.1310.10">
    <property type="entry name" value="Nucleoid-associated protein YbaB-like domain"/>
    <property type="match status" value="1"/>
</dbReference>
<dbReference type="HAMAP" id="MF_00274">
    <property type="entry name" value="DNA_YbaB_EbfC"/>
    <property type="match status" value="1"/>
</dbReference>
<dbReference type="InterPro" id="IPR036894">
    <property type="entry name" value="YbaB-like_sf"/>
</dbReference>
<dbReference type="InterPro" id="IPR004401">
    <property type="entry name" value="YbaB/EbfC"/>
</dbReference>
<dbReference type="NCBIfam" id="TIGR00103">
    <property type="entry name" value="DNA_YbaB_EbfC"/>
    <property type="match status" value="1"/>
</dbReference>
<dbReference type="PANTHER" id="PTHR33449">
    <property type="entry name" value="NUCLEOID-ASSOCIATED PROTEIN YBAB"/>
    <property type="match status" value="1"/>
</dbReference>
<dbReference type="PANTHER" id="PTHR33449:SF1">
    <property type="entry name" value="NUCLEOID-ASSOCIATED PROTEIN YBAB"/>
    <property type="match status" value="1"/>
</dbReference>
<dbReference type="Pfam" id="PF02575">
    <property type="entry name" value="YbaB_DNA_bd"/>
    <property type="match status" value="1"/>
</dbReference>
<dbReference type="PIRSF" id="PIRSF004555">
    <property type="entry name" value="UCP004555"/>
    <property type="match status" value="1"/>
</dbReference>
<dbReference type="SUPFAM" id="SSF82607">
    <property type="entry name" value="YbaB-like"/>
    <property type="match status" value="1"/>
</dbReference>
<evidence type="ECO:0000255" key="1">
    <source>
        <dbReference type="HAMAP-Rule" id="MF_00274"/>
    </source>
</evidence>
<reference key="1">
    <citation type="journal article" date="2006" name="Mol. Microbiol.">
        <title>Role of pathogenicity island-associated integrases in the genome plasticity of uropathogenic Escherichia coli strain 536.</title>
        <authorList>
            <person name="Hochhut B."/>
            <person name="Wilde C."/>
            <person name="Balling G."/>
            <person name="Middendorf B."/>
            <person name="Dobrindt U."/>
            <person name="Brzuszkiewicz E."/>
            <person name="Gottschalk G."/>
            <person name="Carniel E."/>
            <person name="Hacker J."/>
        </authorList>
    </citation>
    <scope>NUCLEOTIDE SEQUENCE [LARGE SCALE GENOMIC DNA]</scope>
    <source>
        <strain>536 / UPEC</strain>
    </source>
</reference>
<accession>Q0TKH0</accession>
<keyword id="KW-0963">Cytoplasm</keyword>
<keyword id="KW-0238">DNA-binding</keyword>
<organism>
    <name type="scientific">Escherichia coli O6:K15:H31 (strain 536 / UPEC)</name>
    <dbReference type="NCBI Taxonomy" id="362663"/>
    <lineage>
        <taxon>Bacteria</taxon>
        <taxon>Pseudomonadati</taxon>
        <taxon>Pseudomonadota</taxon>
        <taxon>Gammaproteobacteria</taxon>
        <taxon>Enterobacterales</taxon>
        <taxon>Enterobacteriaceae</taxon>
        <taxon>Escherichia</taxon>
    </lineage>
</organism>
<comment type="function">
    <text evidence="1">Binds to DNA and alters its conformation. May be involved in regulation of gene expression, nucleoid organization and DNA protection.</text>
</comment>
<comment type="subunit">
    <text evidence="1">Homodimer.</text>
</comment>
<comment type="subcellular location">
    <subcellularLocation>
        <location evidence="1">Cytoplasm</location>
        <location evidence="1">Nucleoid</location>
    </subcellularLocation>
</comment>
<comment type="similarity">
    <text evidence="1">Belongs to the YbaB/EbfC family.</text>
</comment>
<name>YBAB_ECOL5</name>
<gene>
    <name evidence="1" type="primary">ybaB</name>
    <name type="ordered locus">ECP_0532</name>
</gene>
<feature type="chain" id="PRO_1000003739" description="Nucleoid-associated protein YbaB">
    <location>
        <begin position="1"/>
        <end position="109"/>
    </location>
</feature>